<dbReference type="EMBL" id="AY211933">
    <property type="protein sequence ID" value="AAP48891.1"/>
    <property type="molecule type" value="mRNA"/>
</dbReference>
<dbReference type="SMR" id="Q6H3D6"/>
<dbReference type="GO" id="GO:0005576">
    <property type="term" value="C:extracellular region"/>
    <property type="evidence" value="ECO:0007669"/>
    <property type="project" value="UniProtKB-SubCell"/>
</dbReference>
<dbReference type="GO" id="GO:0005509">
    <property type="term" value="F:calcium ion binding"/>
    <property type="evidence" value="ECO:0007669"/>
    <property type="project" value="InterPro"/>
</dbReference>
<dbReference type="GO" id="GO:0047498">
    <property type="term" value="F:calcium-dependent phospholipase A2 activity"/>
    <property type="evidence" value="ECO:0007669"/>
    <property type="project" value="TreeGrafter"/>
</dbReference>
<dbReference type="GO" id="GO:0005543">
    <property type="term" value="F:phospholipid binding"/>
    <property type="evidence" value="ECO:0007669"/>
    <property type="project" value="TreeGrafter"/>
</dbReference>
<dbReference type="GO" id="GO:0090729">
    <property type="term" value="F:toxin activity"/>
    <property type="evidence" value="ECO:0007669"/>
    <property type="project" value="UniProtKB-KW"/>
</dbReference>
<dbReference type="GO" id="GO:0050482">
    <property type="term" value="P:arachidonate secretion"/>
    <property type="evidence" value="ECO:0007669"/>
    <property type="project" value="InterPro"/>
</dbReference>
<dbReference type="GO" id="GO:0016042">
    <property type="term" value="P:lipid catabolic process"/>
    <property type="evidence" value="ECO:0007669"/>
    <property type="project" value="InterPro"/>
</dbReference>
<dbReference type="GO" id="GO:0042130">
    <property type="term" value="P:negative regulation of T cell proliferation"/>
    <property type="evidence" value="ECO:0007669"/>
    <property type="project" value="TreeGrafter"/>
</dbReference>
<dbReference type="GO" id="GO:0006644">
    <property type="term" value="P:phospholipid metabolic process"/>
    <property type="evidence" value="ECO:0007669"/>
    <property type="project" value="InterPro"/>
</dbReference>
<dbReference type="CDD" id="cd00125">
    <property type="entry name" value="PLA2c"/>
    <property type="match status" value="1"/>
</dbReference>
<dbReference type="FunFam" id="1.20.90.10:FF:000001">
    <property type="entry name" value="Basic phospholipase A2 homolog"/>
    <property type="match status" value="1"/>
</dbReference>
<dbReference type="Gene3D" id="1.20.90.10">
    <property type="entry name" value="Phospholipase A2 domain"/>
    <property type="match status" value="1"/>
</dbReference>
<dbReference type="InterPro" id="IPR001211">
    <property type="entry name" value="PLipase_A2"/>
</dbReference>
<dbReference type="InterPro" id="IPR033112">
    <property type="entry name" value="PLipase_A2_Asp_AS"/>
</dbReference>
<dbReference type="InterPro" id="IPR016090">
    <property type="entry name" value="PLipase_A2_dom"/>
</dbReference>
<dbReference type="InterPro" id="IPR036444">
    <property type="entry name" value="PLipase_A2_dom_sf"/>
</dbReference>
<dbReference type="InterPro" id="IPR033113">
    <property type="entry name" value="PLipase_A2_His_AS"/>
</dbReference>
<dbReference type="PANTHER" id="PTHR11716">
    <property type="entry name" value="PHOSPHOLIPASE A2 FAMILY MEMBER"/>
    <property type="match status" value="1"/>
</dbReference>
<dbReference type="PANTHER" id="PTHR11716:SF9">
    <property type="entry name" value="PHOSPHOLIPASE A2, MEMBRANE ASSOCIATED"/>
    <property type="match status" value="1"/>
</dbReference>
<dbReference type="Pfam" id="PF00068">
    <property type="entry name" value="Phospholip_A2_1"/>
    <property type="match status" value="1"/>
</dbReference>
<dbReference type="PRINTS" id="PR00389">
    <property type="entry name" value="PHPHLIPASEA2"/>
</dbReference>
<dbReference type="SMART" id="SM00085">
    <property type="entry name" value="PA2c"/>
    <property type="match status" value="1"/>
</dbReference>
<dbReference type="SUPFAM" id="SSF48619">
    <property type="entry name" value="Phospholipase A2, PLA2"/>
    <property type="match status" value="1"/>
</dbReference>
<dbReference type="PROSITE" id="PS00119">
    <property type="entry name" value="PA2_ASP"/>
    <property type="match status" value="1"/>
</dbReference>
<dbReference type="PROSITE" id="PS00118">
    <property type="entry name" value="PA2_HIS"/>
    <property type="match status" value="1"/>
</dbReference>
<name>PA2HD_TRIST</name>
<sequence length="137" mass="15488">MRTLWIMAVLLLGVEGHLLQLRKMIKKMTNKEPILSYGKYGCNCGMAGRGQPVDGTDRCCSIHNCCYGKVNGCSPKWDYYTYSEENGDIVCEEKHPCKDVCECDKAVATCFRDNLDTYKKRNIFHPKSSCVKVSTPC</sequence>
<keyword id="KW-1203">Blood coagulation cascade inhibiting toxin</keyword>
<keyword id="KW-0903">Direct protein sequencing</keyword>
<keyword id="KW-1015">Disulfide bond</keyword>
<keyword id="KW-1199">Hemostasis impairing toxin</keyword>
<keyword id="KW-0959">Myotoxin</keyword>
<keyword id="KW-0964">Secreted</keyword>
<keyword id="KW-0732">Signal</keyword>
<keyword id="KW-0800">Toxin</keyword>
<feature type="signal peptide" evidence="2 3">
    <location>
        <begin position="1"/>
        <end position="16"/>
    </location>
</feature>
<feature type="chain" id="PRO_0000419077" description="Basic phospholipase A2 homolog Ts-R6">
    <location>
        <begin position="17"/>
        <end position="137"/>
    </location>
</feature>
<feature type="disulfide bond" evidence="1">
    <location>
        <begin position="42"/>
        <end position="130"/>
    </location>
</feature>
<feature type="disulfide bond" evidence="1">
    <location>
        <begin position="44"/>
        <end position="60"/>
    </location>
</feature>
<feature type="disulfide bond" evidence="1">
    <location>
        <begin position="59"/>
        <end position="110"/>
    </location>
</feature>
<feature type="disulfide bond" evidence="1">
    <location>
        <begin position="65"/>
        <end position="137"/>
    </location>
</feature>
<feature type="disulfide bond" evidence="1">
    <location>
        <begin position="66"/>
        <end position="103"/>
    </location>
</feature>
<feature type="disulfide bond" evidence="1">
    <location>
        <begin position="73"/>
        <end position="97"/>
    </location>
</feature>
<feature type="disulfide bond" evidence="1">
    <location>
        <begin position="91"/>
        <end position="101"/>
    </location>
</feature>
<reference key="1">
    <citation type="journal article" date="2004" name="Biochem. J.">
        <title>Venom phospholipases A2 of bamboo viper (Trimeresurus stejnegeri): molecular characterization, geographic variations and evidence of multiple ancestries.</title>
        <authorList>
            <person name="Tsai I.-H."/>
            <person name="Wang Y.-M."/>
            <person name="Chen Y.-H."/>
            <person name="Tsai T.-S."/>
            <person name="Tu M.-C."/>
        </authorList>
    </citation>
    <scope>NUCLEOTIDE SEQUENCE [MRNA]</scope>
    <scope>PROTEIN SEQUENCE OF 17-39</scope>
    <scope>FUNCTION</scope>
    <scope>DEVELOPMENTAL STAGE</scope>
    <scope>MASS SPECTROMETRY</scope>
    <source>
        <strain>Chinese</strain>
        <strain>Taiwan</strain>
        <tissue>Venom</tissue>
        <tissue>Venom gland</tissue>
    </source>
</reference>
<reference key="2">
    <citation type="journal article" date="2003" name="J. Hubei Univ.">
        <title>Isolation and sequencing of five variants of phospholipase A2 from venom of snake Trimeresurus stejnegeri.</title>
        <authorList>
            <person name="Li S.-Y."/>
            <person name="Guo Z.-X."/>
            <person name="Yang Y.-Y."/>
            <person name="Wang W.-Y."/>
            <person name="Xiong Y.-L."/>
        </authorList>
    </citation>
    <scope>PROTEIN SEQUENCE OF 17-32</scope>
    <source>
        <tissue>Venom</tissue>
    </source>
</reference>
<proteinExistence type="evidence at protein level"/>
<evidence type="ECO:0000250" key="1"/>
<evidence type="ECO:0000269" key="2">
    <source>
    </source>
</evidence>
<evidence type="ECO:0000269" key="3">
    <source ref="2"/>
</evidence>
<evidence type="ECO:0000305" key="4"/>
<comment type="function">
    <text evidence="2">Snake venom phospholipase A2 homolog that induces local edema a few hours after injection (5-10 ug) in the hind paw and shows weak anticoagulant and myotoxic activities.</text>
</comment>
<comment type="subcellular location">
    <subcellularLocation>
        <location>Secreted</location>
    </subcellularLocation>
</comment>
<comment type="tissue specificity">
    <text>Expressed by the venom gland.</text>
</comment>
<comment type="developmental stage">
    <text evidence="2">Is expressed more abundantly in adult than in juvenile vipers.</text>
</comment>
<comment type="mass spectrometry" mass="13689.0" method="Electrospray" evidence="2"/>
<comment type="similarity">
    <text evidence="4">Belongs to the phospholipase A2 family. Group II subfamily. N49 sub-subfamily.</text>
</comment>
<comment type="caution">
    <text evidence="4">Does not bind calcium as one of the calcium-binding sites is lost (Asp-&gt;Asn in position 64, which corresponds to 'Asn-49' in the current nomenclature).</text>
</comment>
<protein>
    <recommendedName>
        <fullName>Basic phospholipase A2 homolog Ts-R6</fullName>
        <shortName>svPLA2 homolog</shortName>
    </recommendedName>
    <alternativeName>
        <fullName>CTs-R6</fullName>
    </alternativeName>
    <alternativeName>
        <fullName>PLA2-I</fullName>
    </alternativeName>
</protein>
<accession>Q6H3D6</accession>
<accession>P82892</accession>
<organism>
    <name type="scientific">Trimeresurus stejnegeri</name>
    <name type="common">Chinese green tree viper</name>
    <name type="synonym">Viridovipera stejnegeri</name>
    <dbReference type="NCBI Taxonomy" id="39682"/>
    <lineage>
        <taxon>Eukaryota</taxon>
        <taxon>Metazoa</taxon>
        <taxon>Chordata</taxon>
        <taxon>Craniata</taxon>
        <taxon>Vertebrata</taxon>
        <taxon>Euteleostomi</taxon>
        <taxon>Lepidosauria</taxon>
        <taxon>Squamata</taxon>
        <taxon>Bifurcata</taxon>
        <taxon>Unidentata</taxon>
        <taxon>Episquamata</taxon>
        <taxon>Toxicofera</taxon>
        <taxon>Serpentes</taxon>
        <taxon>Colubroidea</taxon>
        <taxon>Viperidae</taxon>
        <taxon>Crotalinae</taxon>
        <taxon>Trimeresurus</taxon>
    </lineage>
</organism>